<proteinExistence type="inferred from homology"/>
<comment type="function">
    <text evidence="1">This protein is involved in the repair of mismatches in DNA. It is possible that it carries out the mismatch recognition step. This protein has a weak ATPase activity.</text>
</comment>
<comment type="similarity">
    <text evidence="1">Belongs to the DNA mismatch repair MutS family.</text>
</comment>
<evidence type="ECO:0000255" key="1">
    <source>
        <dbReference type="HAMAP-Rule" id="MF_00096"/>
    </source>
</evidence>
<dbReference type="EMBL" id="CP000089">
    <property type="protein sequence ID" value="AAZ47083.1"/>
    <property type="molecule type" value="Genomic_DNA"/>
</dbReference>
<dbReference type="SMR" id="Q47DJ8"/>
<dbReference type="STRING" id="159087.Daro_2347"/>
<dbReference type="KEGG" id="dar:Daro_2347"/>
<dbReference type="eggNOG" id="COG0249">
    <property type="taxonomic scope" value="Bacteria"/>
</dbReference>
<dbReference type="HOGENOM" id="CLU_002472_4_0_4"/>
<dbReference type="OrthoDB" id="9802448at2"/>
<dbReference type="GO" id="GO:0005829">
    <property type="term" value="C:cytosol"/>
    <property type="evidence" value="ECO:0007669"/>
    <property type="project" value="TreeGrafter"/>
</dbReference>
<dbReference type="GO" id="GO:0005524">
    <property type="term" value="F:ATP binding"/>
    <property type="evidence" value="ECO:0007669"/>
    <property type="project" value="UniProtKB-UniRule"/>
</dbReference>
<dbReference type="GO" id="GO:0140664">
    <property type="term" value="F:ATP-dependent DNA damage sensor activity"/>
    <property type="evidence" value="ECO:0007669"/>
    <property type="project" value="InterPro"/>
</dbReference>
<dbReference type="GO" id="GO:0003684">
    <property type="term" value="F:damaged DNA binding"/>
    <property type="evidence" value="ECO:0007669"/>
    <property type="project" value="UniProtKB-UniRule"/>
</dbReference>
<dbReference type="GO" id="GO:0030983">
    <property type="term" value="F:mismatched DNA binding"/>
    <property type="evidence" value="ECO:0007669"/>
    <property type="project" value="InterPro"/>
</dbReference>
<dbReference type="GO" id="GO:0006298">
    <property type="term" value="P:mismatch repair"/>
    <property type="evidence" value="ECO:0007669"/>
    <property type="project" value="UniProtKB-UniRule"/>
</dbReference>
<dbReference type="CDD" id="cd03284">
    <property type="entry name" value="ABC_MutS1"/>
    <property type="match status" value="1"/>
</dbReference>
<dbReference type="FunFam" id="3.40.1170.10:FF:000001">
    <property type="entry name" value="DNA mismatch repair protein MutS"/>
    <property type="match status" value="1"/>
</dbReference>
<dbReference type="FunFam" id="3.40.50.300:FF:000870">
    <property type="entry name" value="MutS protein homolog 4"/>
    <property type="match status" value="1"/>
</dbReference>
<dbReference type="Gene3D" id="1.10.1420.10">
    <property type="match status" value="2"/>
</dbReference>
<dbReference type="Gene3D" id="6.10.140.430">
    <property type="match status" value="1"/>
</dbReference>
<dbReference type="Gene3D" id="3.40.1170.10">
    <property type="entry name" value="DNA repair protein MutS, domain I"/>
    <property type="match status" value="1"/>
</dbReference>
<dbReference type="Gene3D" id="3.30.420.110">
    <property type="entry name" value="MutS, connector domain"/>
    <property type="match status" value="1"/>
</dbReference>
<dbReference type="Gene3D" id="3.40.50.300">
    <property type="entry name" value="P-loop containing nucleotide triphosphate hydrolases"/>
    <property type="match status" value="1"/>
</dbReference>
<dbReference type="HAMAP" id="MF_00096">
    <property type="entry name" value="MutS"/>
    <property type="match status" value="1"/>
</dbReference>
<dbReference type="InterPro" id="IPR005748">
    <property type="entry name" value="DNA_mismatch_repair_MutS"/>
</dbReference>
<dbReference type="InterPro" id="IPR007695">
    <property type="entry name" value="DNA_mismatch_repair_MutS-lik_N"/>
</dbReference>
<dbReference type="InterPro" id="IPR017261">
    <property type="entry name" value="DNA_mismatch_repair_MutS/MSH"/>
</dbReference>
<dbReference type="InterPro" id="IPR000432">
    <property type="entry name" value="DNA_mismatch_repair_MutS_C"/>
</dbReference>
<dbReference type="InterPro" id="IPR007861">
    <property type="entry name" value="DNA_mismatch_repair_MutS_clamp"/>
</dbReference>
<dbReference type="InterPro" id="IPR007696">
    <property type="entry name" value="DNA_mismatch_repair_MutS_core"/>
</dbReference>
<dbReference type="InterPro" id="IPR016151">
    <property type="entry name" value="DNA_mismatch_repair_MutS_N"/>
</dbReference>
<dbReference type="InterPro" id="IPR036187">
    <property type="entry name" value="DNA_mismatch_repair_MutS_sf"/>
</dbReference>
<dbReference type="InterPro" id="IPR007860">
    <property type="entry name" value="DNA_mmatch_repair_MutS_con_dom"/>
</dbReference>
<dbReference type="InterPro" id="IPR045076">
    <property type="entry name" value="MutS"/>
</dbReference>
<dbReference type="InterPro" id="IPR036678">
    <property type="entry name" value="MutS_con_dom_sf"/>
</dbReference>
<dbReference type="InterPro" id="IPR027417">
    <property type="entry name" value="P-loop_NTPase"/>
</dbReference>
<dbReference type="NCBIfam" id="TIGR01070">
    <property type="entry name" value="mutS1"/>
    <property type="match status" value="1"/>
</dbReference>
<dbReference type="NCBIfam" id="NF003810">
    <property type="entry name" value="PRK05399.1"/>
    <property type="match status" value="1"/>
</dbReference>
<dbReference type="PANTHER" id="PTHR11361:SF34">
    <property type="entry name" value="DNA MISMATCH REPAIR PROTEIN MSH1, MITOCHONDRIAL"/>
    <property type="match status" value="1"/>
</dbReference>
<dbReference type="PANTHER" id="PTHR11361">
    <property type="entry name" value="DNA MISMATCH REPAIR PROTEIN MUTS FAMILY MEMBER"/>
    <property type="match status" value="1"/>
</dbReference>
<dbReference type="Pfam" id="PF01624">
    <property type="entry name" value="MutS_I"/>
    <property type="match status" value="1"/>
</dbReference>
<dbReference type="Pfam" id="PF05188">
    <property type="entry name" value="MutS_II"/>
    <property type="match status" value="1"/>
</dbReference>
<dbReference type="Pfam" id="PF05192">
    <property type="entry name" value="MutS_III"/>
    <property type="match status" value="1"/>
</dbReference>
<dbReference type="Pfam" id="PF05190">
    <property type="entry name" value="MutS_IV"/>
    <property type="match status" value="1"/>
</dbReference>
<dbReference type="Pfam" id="PF00488">
    <property type="entry name" value="MutS_V"/>
    <property type="match status" value="1"/>
</dbReference>
<dbReference type="PIRSF" id="PIRSF037677">
    <property type="entry name" value="DNA_mis_repair_Msh6"/>
    <property type="match status" value="1"/>
</dbReference>
<dbReference type="SMART" id="SM00534">
    <property type="entry name" value="MUTSac"/>
    <property type="match status" value="1"/>
</dbReference>
<dbReference type="SMART" id="SM00533">
    <property type="entry name" value="MUTSd"/>
    <property type="match status" value="1"/>
</dbReference>
<dbReference type="SUPFAM" id="SSF55271">
    <property type="entry name" value="DNA repair protein MutS, domain I"/>
    <property type="match status" value="1"/>
</dbReference>
<dbReference type="SUPFAM" id="SSF53150">
    <property type="entry name" value="DNA repair protein MutS, domain II"/>
    <property type="match status" value="1"/>
</dbReference>
<dbReference type="SUPFAM" id="SSF48334">
    <property type="entry name" value="DNA repair protein MutS, domain III"/>
    <property type="match status" value="1"/>
</dbReference>
<dbReference type="SUPFAM" id="SSF52540">
    <property type="entry name" value="P-loop containing nucleoside triphosphate hydrolases"/>
    <property type="match status" value="1"/>
</dbReference>
<dbReference type="PROSITE" id="PS00486">
    <property type="entry name" value="DNA_MISMATCH_REPAIR_2"/>
    <property type="match status" value="1"/>
</dbReference>
<protein>
    <recommendedName>
        <fullName evidence="1">DNA mismatch repair protein MutS</fullName>
    </recommendedName>
</protein>
<feature type="chain" id="PRO_0000224364" description="DNA mismatch repair protein MutS">
    <location>
        <begin position="1"/>
        <end position="860"/>
    </location>
</feature>
<feature type="binding site" evidence="1">
    <location>
        <begin position="620"/>
        <end position="627"/>
    </location>
    <ligand>
        <name>ATP</name>
        <dbReference type="ChEBI" id="CHEBI:30616"/>
    </ligand>
</feature>
<gene>
    <name evidence="1" type="primary">mutS</name>
    <name type="ordered locus">Daro_2347</name>
</gene>
<sequence>MVKDKAPDLSKHTPMMRQYLALKANHPNTLLFYRMGDFYELFHEDAEKAARLLDITLTTRGQSAGVPIKMCGIPFHSLEPYLARLVKLGESAVICEQIGDPATSKGPVERAVARIVTPGTLTDAALIDDKQDLWLLAVTTHRNTAGIARLNLASGEFILIEVPTEQIPATLERIRPAEILYPESWTPNFGVDVARTRQPDWYFEFDSARRLLCDQFEVASLAGFGAEGLKPAIAAAGALLQYAQATQSGKLPHLRGLTVEIEGAYLGLDLATRRNLELTETLRGQPSPTLFSLLDNCVTSMGSRLLRHTLHHPLRARDIPAARHGAVEALLEDYGRLGNEVRKALRGIADIERIAGRVALRNARPRDLASLRESVARLEGLRAPLSDSPAPLIAQLFTELETPYPALELLVRAIAAEPGAQVRDGGVIAPGYDPDLDELRSLNDNCGAFLVDMEARERERSGIASLKVEYNKVHGFYIEVTHANVDKIPDDYRRRQTLKNAERYITPELKAFEDKALSAQERSLAREKLLYEAILDALLPVVPTLQTIARAIAQLDLLAGFAESALKRNWCKPEFAAETQLSITGGRHPVVEGELTNQAETFIANDCLLAENRRLLLITGPNMGGKSTYMRQVALIALLAHIGCYVPADRCVLGPLDRIFTRIGASDDLASGRSTFMVEMTEAAAILHHATNQSLVLMDEIGRGTSTFDGMALAFAILRHLIEKNQSLTLFATHYFELTRLSHEYSELANVHLGAVEHNDRIVFMHAVEEGPANQSYGIQVAALAGIPTAVVRAARKQLREFEQRAAVDPLQPDLFAQGAPEPAEPEPHPVVEQLAAIDPDSLTPREALDALYALKGLLR</sequence>
<keyword id="KW-0067">ATP-binding</keyword>
<keyword id="KW-0227">DNA damage</keyword>
<keyword id="KW-0234">DNA repair</keyword>
<keyword id="KW-0238">DNA-binding</keyword>
<keyword id="KW-0547">Nucleotide-binding</keyword>
<accession>Q47DJ8</accession>
<organism>
    <name type="scientific">Dechloromonas aromatica (strain RCB)</name>
    <dbReference type="NCBI Taxonomy" id="159087"/>
    <lineage>
        <taxon>Bacteria</taxon>
        <taxon>Pseudomonadati</taxon>
        <taxon>Pseudomonadota</taxon>
        <taxon>Betaproteobacteria</taxon>
        <taxon>Rhodocyclales</taxon>
        <taxon>Azonexaceae</taxon>
        <taxon>Dechloromonas</taxon>
    </lineage>
</organism>
<reference key="1">
    <citation type="journal article" date="2009" name="BMC Genomics">
        <title>Metabolic analysis of the soil microbe Dechloromonas aromatica str. RCB: indications of a surprisingly complex life-style and cryptic anaerobic pathways for aromatic degradation.</title>
        <authorList>
            <person name="Salinero K.K."/>
            <person name="Keller K."/>
            <person name="Feil W.S."/>
            <person name="Feil H."/>
            <person name="Trong S."/>
            <person name="Di Bartolo G."/>
            <person name="Lapidus A."/>
        </authorList>
    </citation>
    <scope>NUCLEOTIDE SEQUENCE [LARGE SCALE GENOMIC DNA]</scope>
    <source>
        <strain>RCB</strain>
    </source>
</reference>
<name>MUTS_DECAR</name>